<protein>
    <recommendedName>
        <fullName>Flagellar biosynthesis protein FlhA</fullName>
    </recommendedName>
</protein>
<comment type="function">
    <text>Involved in the export of flagellum proteins.</text>
</comment>
<comment type="subcellular location">
    <subcellularLocation>
        <location evidence="3">Cell membrane</location>
        <topology evidence="3">Multi-pass membrane protein</topology>
    </subcellularLocation>
</comment>
<comment type="similarity">
    <text evidence="3">Belongs to the FHIPEP (flagella/HR/invasion proteins export pore) family.</text>
</comment>
<accession>Q9ZM40</accession>
<sequence>MANERSKLAFKKTFPVFKRFLQSKDLALVVFVIAILAIIIVPLPPFVLDFLLTISIALSVLIILIGLYIDKPTDFSAFPTLLLIVTLYRLALNVATTRMILTQGYKGPSAVSDIITAFGEFSVSGNYVIGAIIFSILVLVNLLVVTNGSTRVTEVRARFALDAMPGKQMAIDADLNSGLIDDKEAKKRRAALSQEADFYGAMDGASKFVKGDAIASIIITLINIIGGFLVGVFQRDMSLSFSASTFTILTIGDGLVGQIPALIIATATGIVATRTTQNEEEDFASKLITQLTNKSKTLVIVGANLLLFATIPGLPTFSLAFVGTLFLFIAWLISREGKDGLLTKLENYLSQKFGLDLSEKPHSSKIKPHAPTTKTKTPEEIKREEEQAIDEVLKIEFLELALGYQLISLADMKQGGDLLERIRGIRKKIASDYGFLMPQIRIRDNLQLPPTHYEIKLKGIVIGEGMVMPDKFLAMNTGFVNREIEGIPTKEPAFGMDALWIDAKNKEEAIIQGYTIIDPSTVIATHTSELVKKYAEDFITKDEVKSLLERLAKDYPTIVEESKKIPTGAIRSVLQALLHEKIPIKDMLTILETITDIAPLVQNDVNILTEQVRARLSRVITNAFKSEDGRLKFLTFSTDSEQFLLNKLRENGTSKSLLLNVGELQKLIEGVSEEAMKVLQKGIAPVILIVEPNLRKALSNQMEQARIDVVVLSHAELDPNSNFEALGTIHINF</sequence>
<dbReference type="EMBL" id="AE001439">
    <property type="protein sequence ID" value="AAD05964.1"/>
    <property type="molecule type" value="Genomic_DNA"/>
</dbReference>
<dbReference type="PIR" id="E71937">
    <property type="entry name" value="E71937"/>
</dbReference>
<dbReference type="RefSeq" id="WP_001262913.1">
    <property type="nucleotide sequence ID" value="NC_000921.1"/>
</dbReference>
<dbReference type="SMR" id="Q9ZM40"/>
<dbReference type="KEGG" id="hpj:jhp_0383"/>
<dbReference type="eggNOG" id="COG1298">
    <property type="taxonomic scope" value="Bacteria"/>
</dbReference>
<dbReference type="Proteomes" id="UP000000804">
    <property type="component" value="Chromosome"/>
</dbReference>
<dbReference type="GO" id="GO:0005886">
    <property type="term" value="C:plasma membrane"/>
    <property type="evidence" value="ECO:0007669"/>
    <property type="project" value="UniProtKB-SubCell"/>
</dbReference>
<dbReference type="GO" id="GO:0044780">
    <property type="term" value="P:bacterial-type flagellum assembly"/>
    <property type="evidence" value="ECO:0007669"/>
    <property type="project" value="InterPro"/>
</dbReference>
<dbReference type="GO" id="GO:0009306">
    <property type="term" value="P:protein secretion"/>
    <property type="evidence" value="ECO:0007669"/>
    <property type="project" value="InterPro"/>
</dbReference>
<dbReference type="Gene3D" id="3.40.30.60">
    <property type="entry name" value="FHIPEP family, domain 1"/>
    <property type="match status" value="1"/>
</dbReference>
<dbReference type="Gene3D" id="1.10.8.540">
    <property type="entry name" value="FHIPEP family, domain 3"/>
    <property type="match status" value="1"/>
</dbReference>
<dbReference type="Gene3D" id="3.40.50.12790">
    <property type="entry name" value="FHIPEP family, domain 4"/>
    <property type="match status" value="1"/>
</dbReference>
<dbReference type="InterPro" id="IPR042194">
    <property type="entry name" value="FHIPEP_1"/>
</dbReference>
<dbReference type="InterPro" id="IPR042193">
    <property type="entry name" value="FHIPEP_3"/>
</dbReference>
<dbReference type="InterPro" id="IPR042196">
    <property type="entry name" value="FHIPEP_4"/>
</dbReference>
<dbReference type="InterPro" id="IPR025505">
    <property type="entry name" value="FHIPEP_CS"/>
</dbReference>
<dbReference type="InterPro" id="IPR006301">
    <property type="entry name" value="FlhA"/>
</dbReference>
<dbReference type="InterPro" id="IPR001712">
    <property type="entry name" value="T3SS_FHIPEP"/>
</dbReference>
<dbReference type="NCBIfam" id="TIGR01398">
    <property type="entry name" value="FlhA"/>
    <property type="match status" value="1"/>
</dbReference>
<dbReference type="PANTHER" id="PTHR30161:SF1">
    <property type="entry name" value="FLAGELLAR BIOSYNTHESIS PROTEIN FLHA-RELATED"/>
    <property type="match status" value="1"/>
</dbReference>
<dbReference type="PANTHER" id="PTHR30161">
    <property type="entry name" value="FLAGELLAR EXPORT PROTEIN, MEMBRANE FLHA SUBUNIT-RELATED"/>
    <property type="match status" value="1"/>
</dbReference>
<dbReference type="Pfam" id="PF00771">
    <property type="entry name" value="FHIPEP"/>
    <property type="match status" value="1"/>
</dbReference>
<dbReference type="PIRSF" id="PIRSF005419">
    <property type="entry name" value="FlhA"/>
    <property type="match status" value="1"/>
</dbReference>
<dbReference type="PRINTS" id="PR00949">
    <property type="entry name" value="TYPE3IMAPROT"/>
</dbReference>
<dbReference type="PROSITE" id="PS00994">
    <property type="entry name" value="FHIPEP"/>
    <property type="match status" value="1"/>
</dbReference>
<name>FLHA_HELPJ</name>
<organism>
    <name type="scientific">Helicobacter pylori (strain J99 / ATCC 700824)</name>
    <name type="common">Campylobacter pylori J99</name>
    <dbReference type="NCBI Taxonomy" id="85963"/>
    <lineage>
        <taxon>Bacteria</taxon>
        <taxon>Pseudomonadati</taxon>
        <taxon>Campylobacterota</taxon>
        <taxon>Epsilonproteobacteria</taxon>
        <taxon>Campylobacterales</taxon>
        <taxon>Helicobacteraceae</taxon>
        <taxon>Helicobacter</taxon>
    </lineage>
</organism>
<keyword id="KW-1005">Bacterial flagellum biogenesis</keyword>
<keyword id="KW-1006">Bacterial flagellum protein export</keyword>
<keyword id="KW-1003">Cell membrane</keyword>
<keyword id="KW-0472">Membrane</keyword>
<keyword id="KW-0653">Protein transport</keyword>
<keyword id="KW-0812">Transmembrane</keyword>
<keyword id="KW-1133">Transmembrane helix</keyword>
<keyword id="KW-0813">Transport</keyword>
<reference key="1">
    <citation type="journal article" date="1999" name="Nature">
        <title>Genomic sequence comparison of two unrelated isolates of the human gastric pathogen Helicobacter pylori.</title>
        <authorList>
            <person name="Alm R.A."/>
            <person name="Ling L.-S.L."/>
            <person name="Moir D.T."/>
            <person name="King B.L."/>
            <person name="Brown E.D."/>
            <person name="Doig P.C."/>
            <person name="Smith D.R."/>
            <person name="Noonan B."/>
            <person name="Guild B.C."/>
            <person name="deJonge B.L."/>
            <person name="Carmel G."/>
            <person name="Tummino P.J."/>
            <person name="Caruso A."/>
            <person name="Uria-Nickelsen M."/>
            <person name="Mills D.M."/>
            <person name="Ives C."/>
            <person name="Gibson R."/>
            <person name="Merberg D."/>
            <person name="Mills S.D."/>
            <person name="Jiang Q."/>
            <person name="Taylor D.E."/>
            <person name="Vovis G.F."/>
            <person name="Trust T.J."/>
        </authorList>
    </citation>
    <scope>NUCLEOTIDE SEQUENCE [LARGE SCALE GENOMIC DNA]</scope>
    <source>
        <strain>J99 / ATCC 700824</strain>
    </source>
</reference>
<evidence type="ECO:0000255" key="1"/>
<evidence type="ECO:0000256" key="2">
    <source>
        <dbReference type="SAM" id="MobiDB-lite"/>
    </source>
</evidence>
<evidence type="ECO:0000305" key="3"/>
<gene>
    <name type="primary">flhA</name>
    <name type="synonym">flbA</name>
    <name type="ordered locus">jhp_0383</name>
</gene>
<proteinExistence type="inferred from homology"/>
<feature type="chain" id="PRO_0000190019" description="Flagellar biosynthesis protein FlhA">
    <location>
        <begin position="1"/>
        <end position="733"/>
    </location>
</feature>
<feature type="transmembrane region" description="Helical" evidence="1">
    <location>
        <begin position="28"/>
        <end position="48"/>
    </location>
</feature>
<feature type="transmembrane region" description="Helical" evidence="1">
    <location>
        <begin position="49"/>
        <end position="69"/>
    </location>
</feature>
<feature type="transmembrane region" description="Helical" evidence="1">
    <location>
        <begin position="125"/>
        <end position="145"/>
    </location>
</feature>
<feature type="transmembrane region" description="Helical" evidence="1">
    <location>
        <begin position="213"/>
        <end position="233"/>
    </location>
</feature>
<feature type="transmembrane region" description="Helical" evidence="1">
    <location>
        <begin position="246"/>
        <end position="266"/>
    </location>
</feature>
<feature type="transmembrane region" description="Helical" evidence="1">
    <location>
        <begin position="291"/>
        <end position="311"/>
    </location>
</feature>
<feature type="transmembrane region" description="Helical" evidence="1">
    <location>
        <begin position="313"/>
        <end position="333"/>
    </location>
</feature>
<feature type="region of interest" description="Disordered" evidence="2">
    <location>
        <begin position="360"/>
        <end position="381"/>
    </location>
</feature>